<gene>
    <name evidence="1" type="primary">dnaJ</name>
    <name type="ordered locus">MW1531</name>
</gene>
<organism>
    <name type="scientific">Staphylococcus aureus (strain MW2)</name>
    <dbReference type="NCBI Taxonomy" id="196620"/>
    <lineage>
        <taxon>Bacteria</taxon>
        <taxon>Bacillati</taxon>
        <taxon>Bacillota</taxon>
        <taxon>Bacilli</taxon>
        <taxon>Bacillales</taxon>
        <taxon>Staphylococcaceae</taxon>
        <taxon>Staphylococcus</taxon>
    </lineage>
</organism>
<keyword id="KW-0143">Chaperone</keyword>
<keyword id="KW-0963">Cytoplasm</keyword>
<keyword id="KW-0235">DNA replication</keyword>
<keyword id="KW-0479">Metal-binding</keyword>
<keyword id="KW-0677">Repeat</keyword>
<keyword id="KW-0346">Stress response</keyword>
<keyword id="KW-0862">Zinc</keyword>
<keyword id="KW-0863">Zinc-finger</keyword>
<dbReference type="EMBL" id="BA000033">
    <property type="protein sequence ID" value="BAB95396.1"/>
    <property type="molecule type" value="Genomic_DNA"/>
</dbReference>
<dbReference type="RefSeq" id="WP_001119021.1">
    <property type="nucleotide sequence ID" value="NC_003923.1"/>
</dbReference>
<dbReference type="SMR" id="P63972"/>
<dbReference type="KEGG" id="sam:MW1531"/>
<dbReference type="HOGENOM" id="CLU_017633_0_7_9"/>
<dbReference type="GO" id="GO:0005737">
    <property type="term" value="C:cytoplasm"/>
    <property type="evidence" value="ECO:0007669"/>
    <property type="project" value="UniProtKB-SubCell"/>
</dbReference>
<dbReference type="GO" id="GO:0005524">
    <property type="term" value="F:ATP binding"/>
    <property type="evidence" value="ECO:0007669"/>
    <property type="project" value="InterPro"/>
</dbReference>
<dbReference type="GO" id="GO:0031072">
    <property type="term" value="F:heat shock protein binding"/>
    <property type="evidence" value="ECO:0007669"/>
    <property type="project" value="InterPro"/>
</dbReference>
<dbReference type="GO" id="GO:0051082">
    <property type="term" value="F:unfolded protein binding"/>
    <property type="evidence" value="ECO:0007669"/>
    <property type="project" value="UniProtKB-UniRule"/>
</dbReference>
<dbReference type="GO" id="GO:0008270">
    <property type="term" value="F:zinc ion binding"/>
    <property type="evidence" value="ECO:0007669"/>
    <property type="project" value="UniProtKB-UniRule"/>
</dbReference>
<dbReference type="GO" id="GO:0051085">
    <property type="term" value="P:chaperone cofactor-dependent protein refolding"/>
    <property type="evidence" value="ECO:0007669"/>
    <property type="project" value="TreeGrafter"/>
</dbReference>
<dbReference type="GO" id="GO:0006260">
    <property type="term" value="P:DNA replication"/>
    <property type="evidence" value="ECO:0007669"/>
    <property type="project" value="UniProtKB-KW"/>
</dbReference>
<dbReference type="GO" id="GO:0042026">
    <property type="term" value="P:protein refolding"/>
    <property type="evidence" value="ECO:0007669"/>
    <property type="project" value="TreeGrafter"/>
</dbReference>
<dbReference type="GO" id="GO:0009408">
    <property type="term" value="P:response to heat"/>
    <property type="evidence" value="ECO:0007669"/>
    <property type="project" value="InterPro"/>
</dbReference>
<dbReference type="CDD" id="cd06257">
    <property type="entry name" value="DnaJ"/>
    <property type="match status" value="1"/>
</dbReference>
<dbReference type="CDD" id="cd10747">
    <property type="entry name" value="DnaJ_C"/>
    <property type="match status" value="1"/>
</dbReference>
<dbReference type="CDD" id="cd10719">
    <property type="entry name" value="DnaJ_zf"/>
    <property type="match status" value="1"/>
</dbReference>
<dbReference type="FunFam" id="1.10.287.110:FF:000031">
    <property type="entry name" value="Molecular chaperone DnaJ"/>
    <property type="match status" value="1"/>
</dbReference>
<dbReference type="FunFam" id="2.10.230.10:FF:000002">
    <property type="entry name" value="Molecular chaperone DnaJ"/>
    <property type="match status" value="1"/>
</dbReference>
<dbReference type="FunFam" id="2.60.260.20:FF:000004">
    <property type="entry name" value="Molecular chaperone DnaJ"/>
    <property type="match status" value="1"/>
</dbReference>
<dbReference type="Gene3D" id="1.10.287.110">
    <property type="entry name" value="DnaJ domain"/>
    <property type="match status" value="1"/>
</dbReference>
<dbReference type="Gene3D" id="2.10.230.10">
    <property type="entry name" value="Heat shock protein DnaJ, cysteine-rich domain"/>
    <property type="match status" value="1"/>
</dbReference>
<dbReference type="Gene3D" id="2.60.260.20">
    <property type="entry name" value="Urease metallochaperone UreE, N-terminal domain"/>
    <property type="match status" value="2"/>
</dbReference>
<dbReference type="HAMAP" id="MF_01152">
    <property type="entry name" value="DnaJ"/>
    <property type="match status" value="1"/>
</dbReference>
<dbReference type="InterPro" id="IPR012724">
    <property type="entry name" value="DnaJ"/>
</dbReference>
<dbReference type="InterPro" id="IPR002939">
    <property type="entry name" value="DnaJ_C"/>
</dbReference>
<dbReference type="InterPro" id="IPR001623">
    <property type="entry name" value="DnaJ_domain"/>
</dbReference>
<dbReference type="InterPro" id="IPR018253">
    <property type="entry name" value="DnaJ_domain_CS"/>
</dbReference>
<dbReference type="InterPro" id="IPR008971">
    <property type="entry name" value="HSP40/DnaJ_pept-bd"/>
</dbReference>
<dbReference type="InterPro" id="IPR001305">
    <property type="entry name" value="HSP_DnaJ_Cys-rich_dom"/>
</dbReference>
<dbReference type="InterPro" id="IPR036410">
    <property type="entry name" value="HSP_DnaJ_Cys-rich_dom_sf"/>
</dbReference>
<dbReference type="InterPro" id="IPR036869">
    <property type="entry name" value="J_dom_sf"/>
</dbReference>
<dbReference type="NCBIfam" id="TIGR02349">
    <property type="entry name" value="DnaJ_bact"/>
    <property type="match status" value="1"/>
</dbReference>
<dbReference type="NCBIfam" id="NF008035">
    <property type="entry name" value="PRK10767.1"/>
    <property type="match status" value="1"/>
</dbReference>
<dbReference type="NCBIfam" id="NF010873">
    <property type="entry name" value="PRK14280.1"/>
    <property type="match status" value="1"/>
</dbReference>
<dbReference type="PANTHER" id="PTHR43096:SF48">
    <property type="entry name" value="CHAPERONE PROTEIN DNAJ"/>
    <property type="match status" value="1"/>
</dbReference>
<dbReference type="PANTHER" id="PTHR43096">
    <property type="entry name" value="DNAJ HOMOLOG 1, MITOCHONDRIAL-RELATED"/>
    <property type="match status" value="1"/>
</dbReference>
<dbReference type="Pfam" id="PF00226">
    <property type="entry name" value="DnaJ"/>
    <property type="match status" value="1"/>
</dbReference>
<dbReference type="Pfam" id="PF01556">
    <property type="entry name" value="DnaJ_C"/>
    <property type="match status" value="1"/>
</dbReference>
<dbReference type="Pfam" id="PF00684">
    <property type="entry name" value="DnaJ_CXXCXGXG"/>
    <property type="match status" value="1"/>
</dbReference>
<dbReference type="PRINTS" id="PR00625">
    <property type="entry name" value="JDOMAIN"/>
</dbReference>
<dbReference type="SMART" id="SM00271">
    <property type="entry name" value="DnaJ"/>
    <property type="match status" value="1"/>
</dbReference>
<dbReference type="SUPFAM" id="SSF46565">
    <property type="entry name" value="Chaperone J-domain"/>
    <property type="match status" value="1"/>
</dbReference>
<dbReference type="SUPFAM" id="SSF57938">
    <property type="entry name" value="DnaJ/Hsp40 cysteine-rich domain"/>
    <property type="match status" value="1"/>
</dbReference>
<dbReference type="SUPFAM" id="SSF49493">
    <property type="entry name" value="HSP40/DnaJ peptide-binding domain"/>
    <property type="match status" value="2"/>
</dbReference>
<dbReference type="PROSITE" id="PS00636">
    <property type="entry name" value="DNAJ_1"/>
    <property type="match status" value="1"/>
</dbReference>
<dbReference type="PROSITE" id="PS50076">
    <property type="entry name" value="DNAJ_2"/>
    <property type="match status" value="1"/>
</dbReference>
<dbReference type="PROSITE" id="PS51188">
    <property type="entry name" value="ZF_CR"/>
    <property type="match status" value="1"/>
</dbReference>
<proteinExistence type="inferred from homology"/>
<comment type="function">
    <text evidence="1">Participates actively in the response to hyperosmotic and heat shock by preventing the aggregation of stress-denatured proteins and by disaggregating proteins, also in an autonomous, DnaK-independent fashion. Unfolded proteins bind initially to DnaJ; upon interaction with the DnaJ-bound protein, DnaK hydrolyzes its bound ATP, resulting in the formation of a stable complex. GrpE releases ADP from DnaK; ATP binding to DnaK triggers the release of the substrate protein, thus completing the reaction cycle. Several rounds of ATP-dependent interactions between DnaJ, DnaK and GrpE are required for fully efficient folding. Also involved, together with DnaK and GrpE, in the DNA replication of plasmids through activation of initiation proteins.</text>
</comment>
<comment type="cofactor">
    <cofactor evidence="1">
        <name>Zn(2+)</name>
        <dbReference type="ChEBI" id="CHEBI:29105"/>
    </cofactor>
    <text evidence="1">Binds 2 Zn(2+) ions per monomer.</text>
</comment>
<comment type="subunit">
    <text evidence="1">Homodimer.</text>
</comment>
<comment type="subcellular location">
    <subcellularLocation>
        <location evidence="1">Cytoplasm</location>
    </subcellularLocation>
</comment>
<comment type="domain">
    <text evidence="1">The J domain is necessary and sufficient to stimulate DnaK ATPase activity. Zinc center 1 plays an important role in the autonomous, DnaK-independent chaperone activity of DnaJ. Zinc center 2 is essential for interaction with DnaK and for DnaJ activity.</text>
</comment>
<comment type="similarity">
    <text evidence="1">Belongs to the DnaJ family.</text>
</comment>
<feature type="chain" id="PRO_0000070887" description="Chaperone protein DnaJ">
    <location>
        <begin position="1"/>
        <end position="379"/>
    </location>
</feature>
<feature type="domain" description="J" evidence="1">
    <location>
        <begin position="5"/>
        <end position="69"/>
    </location>
</feature>
<feature type="repeat" description="CXXCXGXG motif">
    <location>
        <begin position="149"/>
        <end position="156"/>
    </location>
</feature>
<feature type="repeat" description="CXXCXGXG motif">
    <location>
        <begin position="166"/>
        <end position="173"/>
    </location>
</feature>
<feature type="repeat" description="CXXCXGXG motif">
    <location>
        <begin position="192"/>
        <end position="199"/>
    </location>
</feature>
<feature type="repeat" description="CXXCXGXG motif">
    <location>
        <begin position="206"/>
        <end position="213"/>
    </location>
</feature>
<feature type="zinc finger region" description="CR-type" evidence="1">
    <location>
        <begin position="136"/>
        <end position="218"/>
    </location>
</feature>
<feature type="binding site" evidence="1">
    <location>
        <position position="149"/>
    </location>
    <ligand>
        <name>Zn(2+)</name>
        <dbReference type="ChEBI" id="CHEBI:29105"/>
        <label>1</label>
    </ligand>
</feature>
<feature type="binding site" evidence="1">
    <location>
        <position position="152"/>
    </location>
    <ligand>
        <name>Zn(2+)</name>
        <dbReference type="ChEBI" id="CHEBI:29105"/>
        <label>1</label>
    </ligand>
</feature>
<feature type="binding site" evidence="1">
    <location>
        <position position="166"/>
    </location>
    <ligand>
        <name>Zn(2+)</name>
        <dbReference type="ChEBI" id="CHEBI:29105"/>
        <label>2</label>
    </ligand>
</feature>
<feature type="binding site" evidence="1">
    <location>
        <position position="169"/>
    </location>
    <ligand>
        <name>Zn(2+)</name>
        <dbReference type="ChEBI" id="CHEBI:29105"/>
        <label>2</label>
    </ligand>
</feature>
<feature type="binding site" evidence="1">
    <location>
        <position position="192"/>
    </location>
    <ligand>
        <name>Zn(2+)</name>
        <dbReference type="ChEBI" id="CHEBI:29105"/>
        <label>2</label>
    </ligand>
</feature>
<feature type="binding site" evidence="1">
    <location>
        <position position="195"/>
    </location>
    <ligand>
        <name>Zn(2+)</name>
        <dbReference type="ChEBI" id="CHEBI:29105"/>
        <label>2</label>
    </ligand>
</feature>
<feature type="binding site" evidence="1">
    <location>
        <position position="206"/>
    </location>
    <ligand>
        <name>Zn(2+)</name>
        <dbReference type="ChEBI" id="CHEBI:29105"/>
        <label>1</label>
    </ligand>
</feature>
<feature type="binding site" evidence="1">
    <location>
        <position position="209"/>
    </location>
    <ligand>
        <name>Zn(2+)</name>
        <dbReference type="ChEBI" id="CHEBI:29105"/>
        <label>1</label>
    </ligand>
</feature>
<name>DNAJ_STAAW</name>
<sequence>MAKRDYYEVLGISKDASKDEIKKAYRKLSKKYHPDINKEEGADEKFKEISEAYEVLSDDNKRASYDQFGHDGPQGFGGQGFNGSDFGGFSGFGGGGFEDIFSSFFGGGRQRDPNAPQKGDDLQYTMTLTFEEAVFGTTKEISIRKDVTCETCHGDGAKPGTSKKTCSYCNGAGHVAVEQNTILGRVRTEQVCPKCNGSGQEFEEACPTCHGKGTENKTVKLEVKVPEGVDNEQQIRLAGEGSPGVNGGPAGDLYVVFRVKPSETFKRDGDDIYYKLNVSFPQAALGDEIKIPTLNNEVMLTIPAGTQTGKQFRLKEKGIKNVHGYGYGDLYVDIKVVTPTKLTDRQKELMKEFAQLNGEEINEQPSNFKDRAKRFFKGE</sequence>
<protein>
    <recommendedName>
        <fullName evidence="1">Chaperone protein DnaJ</fullName>
    </recommendedName>
</protein>
<reference key="1">
    <citation type="journal article" date="2002" name="Lancet">
        <title>Genome and virulence determinants of high virulence community-acquired MRSA.</title>
        <authorList>
            <person name="Baba T."/>
            <person name="Takeuchi F."/>
            <person name="Kuroda M."/>
            <person name="Yuzawa H."/>
            <person name="Aoki K."/>
            <person name="Oguchi A."/>
            <person name="Nagai Y."/>
            <person name="Iwama N."/>
            <person name="Asano K."/>
            <person name="Naimi T."/>
            <person name="Kuroda H."/>
            <person name="Cui L."/>
            <person name="Yamamoto K."/>
            <person name="Hiramatsu K."/>
        </authorList>
    </citation>
    <scope>NUCLEOTIDE SEQUENCE [LARGE SCALE GENOMIC DNA]</scope>
    <source>
        <strain>MW2</strain>
    </source>
</reference>
<accession>P63972</accession>
<accession>Q99TR8</accession>
<evidence type="ECO:0000255" key="1">
    <source>
        <dbReference type="HAMAP-Rule" id="MF_01152"/>
    </source>
</evidence>